<gene>
    <name type="ORF">AFUB_008750</name>
</gene>
<keyword id="KW-0963">Cytoplasm</keyword>
<keyword id="KW-0396">Initiation factor</keyword>
<keyword id="KW-0648">Protein biosynthesis</keyword>
<name>EIF3F_ASPFC</name>
<dbReference type="EMBL" id="DS499594">
    <property type="protein sequence ID" value="EDP56169.1"/>
    <property type="molecule type" value="Genomic_DNA"/>
</dbReference>
<dbReference type="SMR" id="B0XQ55"/>
<dbReference type="EnsemblFungi" id="EDP56169">
    <property type="protein sequence ID" value="EDP56169"/>
    <property type="gene ID" value="AFUB_008750"/>
</dbReference>
<dbReference type="VEuPathDB" id="FungiDB:AFUB_008750"/>
<dbReference type="HOGENOM" id="CLU_027018_0_0_1"/>
<dbReference type="OrthoDB" id="92838at5052"/>
<dbReference type="PhylomeDB" id="B0XQ55"/>
<dbReference type="Proteomes" id="UP000001699">
    <property type="component" value="Unassembled WGS sequence"/>
</dbReference>
<dbReference type="GO" id="GO:0016282">
    <property type="term" value="C:eukaryotic 43S preinitiation complex"/>
    <property type="evidence" value="ECO:0007669"/>
    <property type="project" value="UniProtKB-UniRule"/>
</dbReference>
<dbReference type="GO" id="GO:0033290">
    <property type="term" value="C:eukaryotic 48S preinitiation complex"/>
    <property type="evidence" value="ECO:0007669"/>
    <property type="project" value="UniProtKB-UniRule"/>
</dbReference>
<dbReference type="GO" id="GO:0071540">
    <property type="term" value="C:eukaryotic translation initiation factor 3 complex, eIF3e"/>
    <property type="evidence" value="ECO:0007669"/>
    <property type="project" value="EnsemblFungi"/>
</dbReference>
<dbReference type="GO" id="GO:0071541">
    <property type="term" value="C:eukaryotic translation initiation factor 3 complex, eIF3m"/>
    <property type="evidence" value="ECO:0007669"/>
    <property type="project" value="EnsemblFungi"/>
</dbReference>
<dbReference type="GO" id="GO:0008237">
    <property type="term" value="F:metallopeptidase activity"/>
    <property type="evidence" value="ECO:0007669"/>
    <property type="project" value="InterPro"/>
</dbReference>
<dbReference type="GO" id="GO:0003743">
    <property type="term" value="F:translation initiation factor activity"/>
    <property type="evidence" value="ECO:0007669"/>
    <property type="project" value="UniProtKB-UniRule"/>
</dbReference>
<dbReference type="GO" id="GO:0031369">
    <property type="term" value="F:translation initiation factor binding"/>
    <property type="evidence" value="ECO:0007669"/>
    <property type="project" value="InterPro"/>
</dbReference>
<dbReference type="GO" id="GO:0001732">
    <property type="term" value="P:formation of cytoplasmic translation initiation complex"/>
    <property type="evidence" value="ECO:0007669"/>
    <property type="project" value="UniProtKB-UniRule"/>
</dbReference>
<dbReference type="CDD" id="cd08064">
    <property type="entry name" value="MPN_eIF3f"/>
    <property type="match status" value="1"/>
</dbReference>
<dbReference type="FunFam" id="3.40.140.10:FF:000019">
    <property type="entry name" value="Eukaryotic translation initiation factor 3 subunit F"/>
    <property type="match status" value="1"/>
</dbReference>
<dbReference type="Gene3D" id="3.40.140.10">
    <property type="entry name" value="Cytidine Deaminase, domain 2"/>
    <property type="match status" value="1"/>
</dbReference>
<dbReference type="HAMAP" id="MF_03005">
    <property type="entry name" value="eIF3f"/>
    <property type="match status" value="1"/>
</dbReference>
<dbReference type="InterPro" id="IPR027531">
    <property type="entry name" value="eIF3f"/>
</dbReference>
<dbReference type="InterPro" id="IPR024969">
    <property type="entry name" value="EIF3F/CSN6-like_C"/>
</dbReference>
<dbReference type="InterPro" id="IPR000555">
    <property type="entry name" value="JAMM/MPN+_dom"/>
</dbReference>
<dbReference type="InterPro" id="IPR037518">
    <property type="entry name" value="MPN"/>
</dbReference>
<dbReference type="PANTHER" id="PTHR10540:SF6">
    <property type="entry name" value="EUKARYOTIC TRANSLATION INITIATION FACTOR 3 SUBUNIT F"/>
    <property type="match status" value="1"/>
</dbReference>
<dbReference type="PANTHER" id="PTHR10540">
    <property type="entry name" value="EUKARYOTIC TRANSLATION INITIATION FACTOR 3 SUBUNIT F-RELATED"/>
    <property type="match status" value="1"/>
</dbReference>
<dbReference type="Pfam" id="PF01398">
    <property type="entry name" value="JAB"/>
    <property type="match status" value="1"/>
</dbReference>
<dbReference type="Pfam" id="PF13012">
    <property type="entry name" value="MitMem_reg"/>
    <property type="match status" value="1"/>
</dbReference>
<dbReference type="SMART" id="SM00232">
    <property type="entry name" value="JAB_MPN"/>
    <property type="match status" value="1"/>
</dbReference>
<dbReference type="PROSITE" id="PS50249">
    <property type="entry name" value="MPN"/>
    <property type="match status" value="1"/>
</dbReference>
<feature type="chain" id="PRO_0000364322" description="Eukaryotic translation initiation factor 3 subunit F">
    <location>
        <begin position="1"/>
        <end position="345"/>
    </location>
</feature>
<feature type="domain" description="MPN" evidence="2">
    <location>
        <begin position="30"/>
        <end position="166"/>
    </location>
</feature>
<feature type="region of interest" description="Disordered" evidence="3">
    <location>
        <begin position="310"/>
        <end position="345"/>
    </location>
</feature>
<feature type="compositionally biased region" description="Low complexity" evidence="3">
    <location>
        <begin position="312"/>
        <end position="321"/>
    </location>
</feature>
<feature type="compositionally biased region" description="Gly residues" evidence="3">
    <location>
        <begin position="322"/>
        <end position="331"/>
    </location>
</feature>
<feature type="compositionally biased region" description="Basic and acidic residues" evidence="3">
    <location>
        <begin position="335"/>
        <end position="345"/>
    </location>
</feature>
<accession>B0XQ55</accession>
<reference key="1">
    <citation type="journal article" date="2008" name="PLoS Genet.">
        <title>Genomic islands in the pathogenic filamentous fungus Aspergillus fumigatus.</title>
        <authorList>
            <person name="Fedorova N.D."/>
            <person name="Khaldi N."/>
            <person name="Joardar V.S."/>
            <person name="Maiti R."/>
            <person name="Amedeo P."/>
            <person name="Anderson M.J."/>
            <person name="Crabtree J."/>
            <person name="Silva J.C."/>
            <person name="Badger J.H."/>
            <person name="Albarraq A."/>
            <person name="Angiuoli S."/>
            <person name="Bussey H."/>
            <person name="Bowyer P."/>
            <person name="Cotty P.J."/>
            <person name="Dyer P.S."/>
            <person name="Egan A."/>
            <person name="Galens K."/>
            <person name="Fraser-Liggett C.M."/>
            <person name="Haas B.J."/>
            <person name="Inman J.M."/>
            <person name="Kent R."/>
            <person name="Lemieux S."/>
            <person name="Malavazi I."/>
            <person name="Orvis J."/>
            <person name="Roemer T."/>
            <person name="Ronning C.M."/>
            <person name="Sundaram J.P."/>
            <person name="Sutton G."/>
            <person name="Turner G."/>
            <person name="Venter J.C."/>
            <person name="White O.R."/>
            <person name="Whitty B.R."/>
            <person name="Youngman P."/>
            <person name="Wolfe K.H."/>
            <person name="Goldman G.H."/>
            <person name="Wortman J.R."/>
            <person name="Jiang B."/>
            <person name="Denning D.W."/>
            <person name="Nierman W.C."/>
        </authorList>
    </citation>
    <scope>NUCLEOTIDE SEQUENCE [LARGE SCALE GENOMIC DNA]</scope>
    <source>
        <strain>CBS 144.89 / FGSC A1163 / CEA10</strain>
    </source>
</reference>
<proteinExistence type="inferred from homology"/>
<protein>
    <recommendedName>
        <fullName evidence="1">Eukaryotic translation initiation factor 3 subunit F</fullName>
        <shortName evidence="1">eIF3f</shortName>
    </recommendedName>
</protein>
<evidence type="ECO:0000255" key="1">
    <source>
        <dbReference type="HAMAP-Rule" id="MF_03005"/>
    </source>
</evidence>
<evidence type="ECO:0000255" key="2">
    <source>
        <dbReference type="PROSITE-ProRule" id="PRU01182"/>
    </source>
</evidence>
<evidence type="ECO:0000256" key="3">
    <source>
        <dbReference type="SAM" id="MobiDB-lite"/>
    </source>
</evidence>
<comment type="function">
    <text evidence="1">Component of the eukaryotic translation initiation factor 3 (eIF-3) complex, which is involved in protein synthesis of a specialized repertoire of mRNAs and, together with other initiation factors, stimulates binding of mRNA and methionyl-tRNAi to the 40S ribosome. The eIF-3 complex specifically targets and initiates translation of a subset of mRNAs involved in cell proliferation.</text>
</comment>
<comment type="subunit">
    <text evidence="1">Component of the eukaryotic translation initiation factor 3 (eIF-3) complex.</text>
</comment>
<comment type="subcellular location">
    <subcellularLocation>
        <location evidence="1">Cytoplasm</location>
    </subcellularLocation>
</comment>
<comment type="similarity">
    <text evidence="1">Belongs to the eIF-3 subunit F family.</text>
</comment>
<sequence>MAETDSFLHLARPLGPVAVGSAPTTAPLNVVIQPQAIFSILDHSLRRNADQERVIGTLLGTRSEDGTEVEIRSTFAVGHTETTDQVEVDMEYQKQMLALHLKANPKEVLVGWYATSSELNTFSALIQNFYSGQGDGTWPHPAVHLTVSTEPGKDIETRAYISAPVGVTAERAADSAAFIPVPYEIRYGEAEKSGLEAIASAKDAESRATNIFTDIEALERAIEEVLGMIDRVSRYVESVIDEEAPASTALGQFLLNALALAPKVEPADIERDFNNHIQDVLVVSYLANTIRTQMELSNRLATAQLTLGGEGASAEAGAQRGQRGGKGGRGGQQRTQERASEEVRA</sequence>
<organism>
    <name type="scientific">Aspergillus fumigatus (strain CBS 144.89 / FGSC A1163 / CEA10)</name>
    <name type="common">Neosartorya fumigata</name>
    <dbReference type="NCBI Taxonomy" id="451804"/>
    <lineage>
        <taxon>Eukaryota</taxon>
        <taxon>Fungi</taxon>
        <taxon>Dikarya</taxon>
        <taxon>Ascomycota</taxon>
        <taxon>Pezizomycotina</taxon>
        <taxon>Eurotiomycetes</taxon>
        <taxon>Eurotiomycetidae</taxon>
        <taxon>Eurotiales</taxon>
        <taxon>Aspergillaceae</taxon>
        <taxon>Aspergillus</taxon>
        <taxon>Aspergillus subgen. Fumigati</taxon>
    </lineage>
</organism>